<sequence>MERPAAGEIDANKCDHLSRGEEGTGDLETSPVGSLADLPFAAVDIQDDCGLPDVPQGNVPQGNPKRSKENRGDRNDHVKKRKKAKKDYQPNYFLSIPITNKKITAGIKVLQNSILRQDNRLTKAMVGDGSFHITLLVMQLLNEDEVNIGTDALLELKPFVEEILEGKHLTLPFHGIGTFQGQVGFVKLADGDHVSALLEIAETAKRTFQEKGILAGESRTFKPHLTFMKLSKAPMLWKKGVRKIEPGLYEQFIDHRFGEEILYQIDLCSMLKKKQSNGYYHCESSIVIGEKDRKEPEDAELVRLSKRLVENAVLKAVQQYLEETQNKKQPGEGNSVKAEEGDRNGDGSDNNRK</sequence>
<proteinExistence type="evidence at protein level"/>
<reference evidence="10 12" key="1">
    <citation type="journal article" date="2004" name="J. Biol. Chem.">
        <title>Identification of a novel A-kinase anchoring protein 18 isoform and evidence for its role in the vasopressin-induced aquaporin-2 shuttle in renal principal cells.</title>
        <authorList>
            <person name="Henn V."/>
            <person name="Edemir B."/>
            <person name="Stefan E."/>
            <person name="Wiesner B."/>
            <person name="Lorenz D."/>
            <person name="Theilig F."/>
            <person name="Schmitt R."/>
            <person name="Vossebein L."/>
            <person name="Tamma G."/>
            <person name="Beyermann M."/>
            <person name="Krause E."/>
            <person name="Herberg F.W."/>
            <person name="Valenti G."/>
            <person name="Bachmann S."/>
            <person name="Rosenthal W."/>
            <person name="Klussmann E."/>
        </authorList>
    </citation>
    <scope>NUCLEOTIDE SEQUENCE [MRNA] (ISOFORM DELTA)</scope>
    <scope>PKA-RII-ALPHA SUBUNIT BINDING</scope>
    <scope>SUBCELLULAR LOCATION</scope>
    <scope>ALTERNATIVE SPLICING</scope>
    <scope>TISSUE SPECIFICITY</scope>
    <scope>MUTAGENESIS OF LEU-308</scope>
    <scope>FUNCTION</scope>
    <source>
        <strain evidence="12">Wistar</strain>
    </source>
</reference>
<reference key="2">
    <citation type="journal article" date="2004" name="Nature">
        <title>Genome sequence of the Brown Norway rat yields insights into mammalian evolution.</title>
        <authorList>
            <person name="Gibbs R.A."/>
            <person name="Weinstock G.M."/>
            <person name="Metzker M.L."/>
            <person name="Muzny D.M."/>
            <person name="Sodergren E.J."/>
            <person name="Scherer S."/>
            <person name="Scott G."/>
            <person name="Steffen D."/>
            <person name="Worley K.C."/>
            <person name="Burch P.E."/>
            <person name="Okwuonu G."/>
            <person name="Hines S."/>
            <person name="Lewis L."/>
            <person name="Deramo C."/>
            <person name="Delgado O."/>
            <person name="Dugan-Rocha S."/>
            <person name="Miner G."/>
            <person name="Morgan M."/>
            <person name="Hawes A."/>
            <person name="Gill R."/>
            <person name="Holt R.A."/>
            <person name="Adams M.D."/>
            <person name="Amanatides P.G."/>
            <person name="Baden-Tillson H."/>
            <person name="Barnstead M."/>
            <person name="Chin S."/>
            <person name="Evans C.A."/>
            <person name="Ferriera S."/>
            <person name="Fosler C."/>
            <person name="Glodek A."/>
            <person name="Gu Z."/>
            <person name="Jennings D."/>
            <person name="Kraft C.L."/>
            <person name="Nguyen T."/>
            <person name="Pfannkoch C.M."/>
            <person name="Sitter C."/>
            <person name="Sutton G.G."/>
            <person name="Venter J.C."/>
            <person name="Woodage T."/>
            <person name="Smith D."/>
            <person name="Lee H.-M."/>
            <person name="Gustafson E."/>
            <person name="Cahill P."/>
            <person name="Kana A."/>
            <person name="Doucette-Stamm L."/>
            <person name="Weinstock K."/>
            <person name="Fechtel K."/>
            <person name="Weiss R.B."/>
            <person name="Dunn D.M."/>
            <person name="Green E.D."/>
            <person name="Blakesley R.W."/>
            <person name="Bouffard G.G."/>
            <person name="De Jong P.J."/>
            <person name="Osoegawa K."/>
            <person name="Zhu B."/>
            <person name="Marra M."/>
            <person name="Schein J."/>
            <person name="Bosdet I."/>
            <person name="Fjell C."/>
            <person name="Jones S."/>
            <person name="Krzywinski M."/>
            <person name="Mathewson C."/>
            <person name="Siddiqui A."/>
            <person name="Wye N."/>
            <person name="McPherson J."/>
            <person name="Zhao S."/>
            <person name="Fraser C.M."/>
            <person name="Shetty J."/>
            <person name="Shatsman S."/>
            <person name="Geer K."/>
            <person name="Chen Y."/>
            <person name="Abramzon S."/>
            <person name="Nierman W.C."/>
            <person name="Havlak P.H."/>
            <person name="Chen R."/>
            <person name="Durbin K.J."/>
            <person name="Egan A."/>
            <person name="Ren Y."/>
            <person name="Song X.-Z."/>
            <person name="Li B."/>
            <person name="Liu Y."/>
            <person name="Qin X."/>
            <person name="Cawley S."/>
            <person name="Cooney A.J."/>
            <person name="D'Souza L.M."/>
            <person name="Martin K."/>
            <person name="Wu J.Q."/>
            <person name="Gonzalez-Garay M.L."/>
            <person name="Jackson A.R."/>
            <person name="Kalafus K.J."/>
            <person name="McLeod M.P."/>
            <person name="Milosavljevic A."/>
            <person name="Virk D."/>
            <person name="Volkov A."/>
            <person name="Wheeler D.A."/>
            <person name="Zhang Z."/>
            <person name="Bailey J.A."/>
            <person name="Eichler E.E."/>
            <person name="Tuzun E."/>
            <person name="Birney E."/>
            <person name="Mongin E."/>
            <person name="Ureta-Vidal A."/>
            <person name="Woodwark C."/>
            <person name="Zdobnov E."/>
            <person name="Bork P."/>
            <person name="Suyama M."/>
            <person name="Torrents D."/>
            <person name="Alexandersson M."/>
            <person name="Trask B.J."/>
            <person name="Young J.M."/>
            <person name="Huang H."/>
            <person name="Wang H."/>
            <person name="Xing H."/>
            <person name="Daniels S."/>
            <person name="Gietzen D."/>
            <person name="Schmidt J."/>
            <person name="Stevens K."/>
            <person name="Vitt U."/>
            <person name="Wingrove J."/>
            <person name="Camara F."/>
            <person name="Mar Alba M."/>
            <person name="Abril J.F."/>
            <person name="Guigo R."/>
            <person name="Smit A."/>
            <person name="Dubchak I."/>
            <person name="Rubin E.M."/>
            <person name="Couronne O."/>
            <person name="Poliakov A."/>
            <person name="Huebner N."/>
            <person name="Ganten D."/>
            <person name="Goesele C."/>
            <person name="Hummel O."/>
            <person name="Kreitler T."/>
            <person name="Lee Y.-A."/>
            <person name="Monti J."/>
            <person name="Schulz H."/>
            <person name="Zimdahl H."/>
            <person name="Himmelbauer H."/>
            <person name="Lehrach H."/>
            <person name="Jacob H.J."/>
            <person name="Bromberg S."/>
            <person name="Gullings-Handley J."/>
            <person name="Jensen-Seaman M.I."/>
            <person name="Kwitek A.E."/>
            <person name="Lazar J."/>
            <person name="Pasko D."/>
            <person name="Tonellato P.J."/>
            <person name="Twigger S."/>
            <person name="Ponting C.P."/>
            <person name="Duarte J.M."/>
            <person name="Rice S."/>
            <person name="Goodstadt L."/>
            <person name="Beatson S.A."/>
            <person name="Emes R.D."/>
            <person name="Winter E.E."/>
            <person name="Webber C."/>
            <person name="Brandt P."/>
            <person name="Nyakatura G."/>
            <person name="Adetobi M."/>
            <person name="Chiaromonte F."/>
            <person name="Elnitski L."/>
            <person name="Eswara P."/>
            <person name="Hardison R.C."/>
            <person name="Hou M."/>
            <person name="Kolbe D."/>
            <person name="Makova K."/>
            <person name="Miller W."/>
            <person name="Nekrutenko A."/>
            <person name="Riemer C."/>
            <person name="Schwartz S."/>
            <person name="Taylor J."/>
            <person name="Yang S."/>
            <person name="Zhang Y."/>
            <person name="Lindpaintner K."/>
            <person name="Andrews T.D."/>
            <person name="Caccamo M."/>
            <person name="Clamp M."/>
            <person name="Clarke L."/>
            <person name="Curwen V."/>
            <person name="Durbin R.M."/>
            <person name="Eyras E."/>
            <person name="Searle S.M."/>
            <person name="Cooper G.M."/>
            <person name="Batzoglou S."/>
            <person name="Brudno M."/>
            <person name="Sidow A."/>
            <person name="Stone E.A."/>
            <person name="Payseur B.A."/>
            <person name="Bourque G."/>
            <person name="Lopez-Otin C."/>
            <person name="Puente X.S."/>
            <person name="Chakrabarti K."/>
            <person name="Chatterji S."/>
            <person name="Dewey C."/>
            <person name="Pachter L."/>
            <person name="Bray N."/>
            <person name="Yap V.B."/>
            <person name="Caspi A."/>
            <person name="Tesler G."/>
            <person name="Pevzner P.A."/>
            <person name="Haussler D."/>
            <person name="Roskin K.M."/>
            <person name="Baertsch R."/>
            <person name="Clawson H."/>
            <person name="Furey T.S."/>
            <person name="Hinrichs A.S."/>
            <person name="Karolchik D."/>
            <person name="Kent W.J."/>
            <person name="Rosenbloom K.R."/>
            <person name="Trumbower H."/>
            <person name="Weirauch M."/>
            <person name="Cooper D.N."/>
            <person name="Stenson P.D."/>
            <person name="Ma B."/>
            <person name="Brent M."/>
            <person name="Arumugam M."/>
            <person name="Shteynberg D."/>
            <person name="Copley R.R."/>
            <person name="Taylor M.S."/>
            <person name="Riethman H."/>
            <person name="Mudunuri U."/>
            <person name="Peterson J."/>
            <person name="Guyer M."/>
            <person name="Felsenfeld A."/>
            <person name="Old S."/>
            <person name="Mockrin S."/>
            <person name="Collins F.S."/>
        </authorList>
    </citation>
    <scope>NUCLEOTIDE SEQUENCE [LARGE SCALE GENOMIC DNA]</scope>
    <source>
        <strain>Brown Norway</strain>
    </source>
</reference>
<reference evidence="11" key="3">
    <citation type="journal article" date="2004" name="Genome Res.">
        <title>The status, quality, and expansion of the NIH full-length cDNA project: the Mammalian Gene Collection (MGC).</title>
        <authorList>
            <consortium name="The MGC Project Team"/>
        </authorList>
    </citation>
    <scope>NUCLEOTIDE SEQUENCE [LARGE SCALE MRNA]</scope>
    <source>
        <tissue evidence="11">Brain</tissue>
    </source>
</reference>
<reference evidence="10" key="4">
    <citation type="journal article" date="2008" name="J. Mol. Biol.">
        <title>AKAP18 contains a phosphoesterase domain that binds AMP.</title>
        <authorList>
            <person name="Gold M.G."/>
            <person name="Smith F.D."/>
            <person name="Scott J.D."/>
            <person name="Barford D."/>
        </authorList>
    </citation>
    <scope>X-RAY CRYSTALLOGRAPHY (1.5 ANGSTROMS) OF 88-292 IN COMPLEX WITH AMP AND CMP</scope>
</reference>
<accession>Q6JP77</accession>
<accession>D3ZMQ5</accession>
<feature type="chain" id="PRO_0000419635" description="A-kinase anchor protein 7 isoforms delta and gamma">
    <location>
        <begin position="1"/>
        <end position="353"/>
    </location>
</feature>
<feature type="region of interest" description="Disordered" evidence="4">
    <location>
        <begin position="1"/>
        <end position="33"/>
    </location>
</feature>
<feature type="region of interest" description="Disordered" evidence="4">
    <location>
        <begin position="47"/>
        <end position="85"/>
    </location>
</feature>
<feature type="region of interest" description="PKA-RII-alpha subunit binding domain" evidence="5">
    <location>
        <begin position="299"/>
        <end position="353"/>
    </location>
</feature>
<feature type="region of interest" description="RI-alpha-binding" evidence="1">
    <location>
        <begin position="300"/>
        <end position="324"/>
    </location>
</feature>
<feature type="region of interest" description="RII-binding" evidence="2">
    <location>
        <begin position="301"/>
        <end position="314"/>
    </location>
</feature>
<feature type="region of interest" description="Disordered" evidence="4">
    <location>
        <begin position="321"/>
        <end position="353"/>
    </location>
</feature>
<feature type="compositionally biased region" description="Basic and acidic residues" evidence="4">
    <location>
        <begin position="1"/>
        <end position="22"/>
    </location>
</feature>
<feature type="compositionally biased region" description="Basic and acidic residues" evidence="4">
    <location>
        <begin position="66"/>
        <end position="76"/>
    </location>
</feature>
<feature type="compositionally biased region" description="Basic and acidic residues" evidence="4">
    <location>
        <begin position="337"/>
        <end position="353"/>
    </location>
</feature>
<feature type="binding site" evidence="7">
    <location>
        <position position="134"/>
    </location>
    <ligand>
        <name>AMP</name>
        <dbReference type="ChEBI" id="CHEBI:456215"/>
    </ligand>
</feature>
<feature type="binding site" evidence="7">
    <location>
        <position position="134"/>
    </location>
    <ligand>
        <name>CMP</name>
        <dbReference type="ChEBI" id="CHEBI:60377"/>
    </ligand>
</feature>
<feature type="binding site" evidence="7">
    <location>
        <begin position="224"/>
        <end position="226"/>
    </location>
    <ligand>
        <name>AMP</name>
        <dbReference type="ChEBI" id="CHEBI:456215"/>
    </ligand>
</feature>
<feature type="binding site" evidence="7">
    <location>
        <begin position="224"/>
        <end position="226"/>
    </location>
    <ligand>
        <name>CMP</name>
        <dbReference type="ChEBI" id="CHEBI:60377"/>
    </ligand>
</feature>
<feature type="splice variant" id="VSP_044297" description="In isoform Gamma." evidence="9">
    <location>
        <begin position="56"/>
        <end position="60"/>
    </location>
</feature>
<feature type="mutagenesis site" description="Reduces PKA-RII-alpha binding." evidence="5">
    <original>L</original>
    <variation>P</variation>
    <location>
        <position position="308"/>
    </location>
</feature>
<organism>
    <name type="scientific">Rattus norvegicus</name>
    <name type="common">Rat</name>
    <dbReference type="NCBI Taxonomy" id="10116"/>
    <lineage>
        <taxon>Eukaryota</taxon>
        <taxon>Metazoa</taxon>
        <taxon>Chordata</taxon>
        <taxon>Craniata</taxon>
        <taxon>Vertebrata</taxon>
        <taxon>Euteleostomi</taxon>
        <taxon>Mammalia</taxon>
        <taxon>Eutheria</taxon>
        <taxon>Euarchontoglires</taxon>
        <taxon>Glires</taxon>
        <taxon>Rodentia</taxon>
        <taxon>Myomorpha</taxon>
        <taxon>Muroidea</taxon>
        <taxon>Muridae</taxon>
        <taxon>Murinae</taxon>
        <taxon>Rattus</taxon>
    </lineage>
</organism>
<evidence type="ECO:0000250" key="1">
    <source>
        <dbReference type="UniProtKB" id="F8VQ58"/>
    </source>
</evidence>
<evidence type="ECO:0000250" key="2">
    <source>
        <dbReference type="UniProtKB" id="O43687"/>
    </source>
</evidence>
<evidence type="ECO:0000250" key="3">
    <source>
        <dbReference type="UniProtKB" id="Q9P0M2"/>
    </source>
</evidence>
<evidence type="ECO:0000256" key="4">
    <source>
        <dbReference type="SAM" id="MobiDB-lite"/>
    </source>
</evidence>
<evidence type="ECO:0000269" key="5">
    <source>
    </source>
</evidence>
<evidence type="ECO:0000269" key="6">
    <source>
    </source>
</evidence>
<evidence type="ECO:0000269" key="7">
    <source>
    </source>
</evidence>
<evidence type="ECO:0000303" key="8">
    <source>
    </source>
</evidence>
<evidence type="ECO:0000303" key="9">
    <source>
    </source>
</evidence>
<evidence type="ECO:0000305" key="10"/>
<evidence type="ECO:0000312" key="11">
    <source>
        <dbReference type="EMBL" id="AAH98632.1"/>
    </source>
</evidence>
<evidence type="ECO:0000312" key="12">
    <source>
        <dbReference type="EMBL" id="AAR06859.1"/>
    </source>
</evidence>
<evidence type="ECO:0000312" key="13">
    <source>
        <dbReference type="RGD" id="1303071"/>
    </source>
</evidence>
<comment type="function">
    <text evidence="3 5 10">Probably targets cAMP-dependent protein kinase (PKA) to the cellular membrane or cytoskeletal structures. The membrane-associated form reduces epithelial sodium channel (ENaC) activity, whereas the free cytoplasmic form may negatively regulate ENaC channel feedback inhibition by intracellular sodium (By similarity). Isoform Delta may be involved in shuttling aquaporin-2 (AQP2) to the plasma membrane.</text>
</comment>
<comment type="subunit">
    <text evidence="3 5 7">Binds cAMP-dependent protein kinase (PKA). Interacts with PRKCA; only the cytoplasmic form is capable of interacting with PRKCA.</text>
</comment>
<comment type="interaction">
    <interactant intactId="EBI-6096191">
        <id>Q6JP77</id>
    </interactant>
    <interactant intactId="EBI-7620725">
        <id>P61016</id>
        <label>Pln</label>
    </interactant>
    <organismsDiffer>false</organismsDiffer>
    <experiments>6</experiments>
</comment>
<comment type="subcellular location">
    <molecule>Isoform Gamma</molecule>
    <subcellularLocation>
        <location evidence="1 3">Nucleus</location>
    </subcellularLocation>
    <subcellularLocation>
        <location evidence="1 3">Cytoplasm</location>
    </subcellularLocation>
</comment>
<comment type="subcellular location">
    <molecule>Isoform Delta</molecule>
    <subcellularLocation>
        <location evidence="5">Nucleus</location>
    </subcellularLocation>
    <subcellularLocation>
        <location evidence="5">Cell membrane</location>
    </subcellularLocation>
    <text evidence="5">Cotranslocates with AQP2 to the plasma membrane in response to arginine-vasopressin (AVP) stimulation in inner medullary collecting duct (IMCD) cells.</text>
</comment>
<comment type="alternative products">
    <event type="alternative splicing"/>
    <isoform>
        <id>Q6JP77-1</id>
        <name evidence="8">Delta</name>
        <sequence type="displayed"/>
    </isoform>
    <isoform>
        <id>Q6JP77-2</id>
        <name evidence="6">Gamma</name>
        <sequence type="described" ref="VSP_044297"/>
    </isoform>
</comment>
<comment type="tissue specificity">
    <text evidence="5">Expressed highly in the heart, and moderately in brain, lung, liver, kidney and testis. Hardly detectable in spleen and skeletal muscle. In kidney, isoform Delta is expressed in the principal cells of the IMCD.</text>
</comment>
<protein>
    <recommendedName>
        <fullName>A-kinase anchor protein 7 isoforms delta and gamma</fullName>
        <shortName>AKAP-7 isoforms delta and gamma</shortName>
    </recommendedName>
    <alternativeName>
        <fullName evidence="1">A-kinase anchor protein 18</fullName>
    </alternativeName>
    <alternativeName>
        <fullName evidence="1">AKAP-18</fullName>
    </alternativeName>
    <alternativeName>
        <fullName>Protein kinase A-anchoring protein 7 isoforms delta and gamma</fullName>
        <shortName>PRKA7 isoforms delta and gamma</shortName>
    </alternativeName>
</protein>
<gene>
    <name evidence="13" type="primary">Akap7</name>
    <name evidence="8" type="synonym">Akap18</name>
</gene>
<dbReference type="EMBL" id="AY350741">
    <property type="protein sequence ID" value="AAR06859.1"/>
    <property type="molecule type" value="mRNA"/>
</dbReference>
<dbReference type="EMBL" id="BC098632">
    <property type="protein sequence ID" value="AAH98632.1"/>
    <property type="molecule type" value="mRNA"/>
</dbReference>
<dbReference type="RefSeq" id="NP_001001801.1">
    <molecule id="Q6JP77-1"/>
    <property type="nucleotide sequence ID" value="NM_001001801.4"/>
</dbReference>
<dbReference type="PDB" id="2VFK">
    <property type="method" value="X-ray"/>
    <property type="resolution" value="1.50 A"/>
    <property type="chains" value="A=88-292"/>
</dbReference>
<dbReference type="PDB" id="2VFL">
    <property type="method" value="X-ray"/>
    <property type="resolution" value="2.25 A"/>
    <property type="chains" value="A=88-292"/>
</dbReference>
<dbReference type="PDB" id="2VFY">
    <property type="method" value="X-ray"/>
    <property type="resolution" value="1.80 A"/>
    <property type="chains" value="A=88-292"/>
</dbReference>
<dbReference type="PDB" id="3J4Q">
    <property type="method" value="EM"/>
    <property type="resolution" value="35.00 A"/>
    <property type="chains" value="A=1-353"/>
</dbReference>
<dbReference type="PDB" id="3J4R">
    <property type="method" value="EM"/>
    <property type="resolution" value="35.00 A"/>
    <property type="chains" value="A=1-353"/>
</dbReference>
<dbReference type="PDBsum" id="2VFK"/>
<dbReference type="PDBsum" id="2VFL"/>
<dbReference type="PDBsum" id="2VFY"/>
<dbReference type="PDBsum" id="3J4Q"/>
<dbReference type="PDBsum" id="3J4R"/>
<dbReference type="EMDB" id="EMD-5755"/>
<dbReference type="EMDB" id="EMD-5756"/>
<dbReference type="SMR" id="Q6JP77"/>
<dbReference type="BioGRID" id="262695">
    <property type="interactions" value="1"/>
</dbReference>
<dbReference type="FunCoup" id="Q6JP77">
    <property type="interactions" value="903"/>
</dbReference>
<dbReference type="IntAct" id="Q6JP77">
    <property type="interactions" value="1"/>
</dbReference>
<dbReference type="MINT" id="Q6JP77"/>
<dbReference type="STRING" id="10116.ENSRNOP00000017617"/>
<dbReference type="PhosphoSitePlus" id="Q6JP77"/>
<dbReference type="PaxDb" id="10116-ENSRNOP00000017617"/>
<dbReference type="GeneID" id="361458"/>
<dbReference type="KEGG" id="rno:361458"/>
<dbReference type="AGR" id="RGD:1303071"/>
<dbReference type="CTD" id="9465"/>
<dbReference type="RGD" id="1303071">
    <property type="gene designation" value="Akap7"/>
</dbReference>
<dbReference type="eggNOG" id="KOG2814">
    <property type="taxonomic scope" value="Eukaryota"/>
</dbReference>
<dbReference type="InParanoid" id="Q6JP77"/>
<dbReference type="PhylomeDB" id="Q6JP77"/>
<dbReference type="TreeFam" id="TF105406"/>
<dbReference type="PRO" id="PR:Q6JP77"/>
<dbReference type="Proteomes" id="UP000002494">
    <property type="component" value="Unplaced"/>
</dbReference>
<dbReference type="GO" id="GO:0016324">
    <property type="term" value="C:apical plasma membrane"/>
    <property type="evidence" value="ECO:0000314"/>
    <property type="project" value="RGD"/>
</dbReference>
<dbReference type="GO" id="GO:0005829">
    <property type="term" value="C:cytosol"/>
    <property type="evidence" value="ECO:0000266"/>
    <property type="project" value="RGD"/>
</dbReference>
<dbReference type="GO" id="GO:0070382">
    <property type="term" value="C:exocytic vesicle"/>
    <property type="evidence" value="ECO:0000314"/>
    <property type="project" value="RGD"/>
</dbReference>
<dbReference type="GO" id="GO:0098686">
    <property type="term" value="C:hippocampal mossy fiber to CA3 synapse"/>
    <property type="evidence" value="ECO:0000266"/>
    <property type="project" value="RGD"/>
</dbReference>
<dbReference type="GO" id="GO:0016328">
    <property type="term" value="C:lateral plasma membrane"/>
    <property type="evidence" value="ECO:0000266"/>
    <property type="project" value="RGD"/>
</dbReference>
<dbReference type="GO" id="GO:0005634">
    <property type="term" value="C:nucleus"/>
    <property type="evidence" value="ECO:0000266"/>
    <property type="project" value="RGD"/>
</dbReference>
<dbReference type="GO" id="GO:0032991">
    <property type="term" value="C:protein-containing complex"/>
    <property type="evidence" value="ECO:0000314"/>
    <property type="project" value="RGD"/>
</dbReference>
<dbReference type="GO" id="GO:0016529">
    <property type="term" value="C:sarcoplasmic reticulum"/>
    <property type="evidence" value="ECO:0000314"/>
    <property type="project" value="RGD"/>
</dbReference>
<dbReference type="GO" id="GO:0030315">
    <property type="term" value="C:T-tubule"/>
    <property type="evidence" value="ECO:0000314"/>
    <property type="project" value="RGD"/>
</dbReference>
<dbReference type="GO" id="GO:0016208">
    <property type="term" value="F:AMP binding"/>
    <property type="evidence" value="ECO:0000314"/>
    <property type="project" value="RGD"/>
</dbReference>
<dbReference type="GO" id="GO:0019904">
    <property type="term" value="F:protein domain specific binding"/>
    <property type="evidence" value="ECO:0000353"/>
    <property type="project" value="RGD"/>
</dbReference>
<dbReference type="GO" id="GO:0051018">
    <property type="term" value="F:protein kinase A binding"/>
    <property type="evidence" value="ECO:0000266"/>
    <property type="project" value="RGD"/>
</dbReference>
<dbReference type="GO" id="GO:0034237">
    <property type="term" value="F:protein kinase A regulatory subunit binding"/>
    <property type="evidence" value="ECO:0000314"/>
    <property type="project" value="RGD"/>
</dbReference>
<dbReference type="GO" id="GO:0019901">
    <property type="term" value="F:protein kinase binding"/>
    <property type="evidence" value="ECO:0000266"/>
    <property type="project" value="RGD"/>
</dbReference>
<dbReference type="GO" id="GO:0001508">
    <property type="term" value="P:action potential"/>
    <property type="evidence" value="ECO:0000266"/>
    <property type="project" value="RGD"/>
</dbReference>
<dbReference type="GO" id="GO:0141156">
    <property type="term" value="P:cAMP/PKA signal transduction"/>
    <property type="evidence" value="ECO:0000315"/>
    <property type="project" value="RGD"/>
</dbReference>
<dbReference type="GO" id="GO:0071320">
    <property type="term" value="P:cellular response to cAMP"/>
    <property type="evidence" value="ECO:0000266"/>
    <property type="project" value="RGD"/>
</dbReference>
<dbReference type="GO" id="GO:0050804">
    <property type="term" value="P:modulation of chemical synaptic transmission"/>
    <property type="evidence" value="ECO:0000266"/>
    <property type="project" value="RGD"/>
</dbReference>
<dbReference type="GO" id="GO:1901381">
    <property type="term" value="P:positive regulation of potassium ion transmembrane transport"/>
    <property type="evidence" value="ECO:0000266"/>
    <property type="project" value="RGD"/>
</dbReference>
<dbReference type="GO" id="GO:0060306">
    <property type="term" value="P:regulation of membrane repolarization"/>
    <property type="evidence" value="ECO:0000266"/>
    <property type="project" value="RGD"/>
</dbReference>
<dbReference type="FunFam" id="3.90.1140.10:FF:000004">
    <property type="entry name" value="A-kinase anchoring protein 7 isoform X1"/>
    <property type="match status" value="1"/>
</dbReference>
<dbReference type="Gene3D" id="3.90.1140.10">
    <property type="entry name" value="Cyclic phosphodiesterase"/>
    <property type="match status" value="1"/>
</dbReference>
<dbReference type="InterPro" id="IPR019510">
    <property type="entry name" value="AKAP7-like_phosphoesterase"/>
</dbReference>
<dbReference type="InterPro" id="IPR052641">
    <property type="entry name" value="AKAP7_isoform_gamma"/>
</dbReference>
<dbReference type="InterPro" id="IPR019511">
    <property type="entry name" value="AKAP7_RI-RII-bd_dom"/>
</dbReference>
<dbReference type="InterPro" id="IPR009097">
    <property type="entry name" value="Cyclic_Pdiesterase"/>
</dbReference>
<dbReference type="PANTHER" id="PTHR15934:SF6">
    <property type="entry name" value="A-KINASE ANCHOR PROTEIN 7 ISOFORM GAMMA"/>
    <property type="match status" value="1"/>
</dbReference>
<dbReference type="PANTHER" id="PTHR15934">
    <property type="entry name" value="RNA 2',3'-CYCLIC PHOSPHODIESTERASE"/>
    <property type="match status" value="1"/>
</dbReference>
<dbReference type="Pfam" id="PF10469">
    <property type="entry name" value="AKAP7_NLS"/>
    <property type="match status" value="1"/>
</dbReference>
<dbReference type="Pfam" id="PF10470">
    <property type="entry name" value="AKAP7_RIRII_bdg"/>
    <property type="match status" value="1"/>
</dbReference>
<dbReference type="SUPFAM" id="SSF55144">
    <property type="entry name" value="LigT-like"/>
    <property type="match status" value="1"/>
</dbReference>
<name>AKA7G_RAT</name>
<keyword id="KW-0002">3D-structure</keyword>
<keyword id="KW-0025">Alternative splicing</keyword>
<keyword id="KW-1003">Cell membrane</keyword>
<keyword id="KW-0963">Cytoplasm</keyword>
<keyword id="KW-0472">Membrane</keyword>
<keyword id="KW-0539">Nucleus</keyword>
<keyword id="KW-1185">Reference proteome</keyword>